<name>EIF3A_TOBAC</name>
<feature type="chain" id="PRO_0000123542" description="Eukaryotic translation initiation factor 3 subunit A">
    <location>
        <begin position="1"/>
        <end position="958"/>
    </location>
</feature>
<feature type="domain" description="PCI" evidence="2">
    <location>
        <begin position="316"/>
        <end position="513"/>
    </location>
</feature>
<feature type="region of interest" description="Disordered" evidence="3">
    <location>
        <begin position="804"/>
        <end position="958"/>
    </location>
</feature>
<feature type="coiled-coil region" evidence="1">
    <location>
        <begin position="93"/>
        <end position="123"/>
    </location>
</feature>
<feature type="coiled-coil region" evidence="1">
    <location>
        <begin position="548"/>
        <end position="696"/>
    </location>
</feature>
<feature type="coiled-coil region" evidence="1">
    <location>
        <begin position="796"/>
        <end position="861"/>
    </location>
</feature>
<feature type="compositionally biased region" description="Basic and acidic residues" evidence="3">
    <location>
        <begin position="804"/>
        <end position="859"/>
    </location>
</feature>
<feature type="compositionally biased region" description="Low complexity" evidence="3">
    <location>
        <begin position="877"/>
        <end position="894"/>
    </location>
</feature>
<feature type="compositionally biased region" description="Basic and acidic residues" evidence="3">
    <location>
        <begin position="929"/>
        <end position="942"/>
    </location>
</feature>
<feature type="compositionally biased region" description="Polar residues" evidence="3">
    <location>
        <begin position="946"/>
        <end position="958"/>
    </location>
</feature>
<evidence type="ECO:0000255" key="1">
    <source>
        <dbReference type="HAMAP-Rule" id="MF_03000"/>
    </source>
</evidence>
<evidence type="ECO:0000255" key="2">
    <source>
        <dbReference type="PROSITE-ProRule" id="PRU01185"/>
    </source>
</evidence>
<evidence type="ECO:0000256" key="3">
    <source>
        <dbReference type="SAM" id="MobiDB-lite"/>
    </source>
</evidence>
<gene>
    <name type="primary">TIF3A1</name>
</gene>
<proteinExistence type="evidence at transcript level"/>
<organism>
    <name type="scientific">Nicotiana tabacum</name>
    <name type="common">Common tobacco</name>
    <dbReference type="NCBI Taxonomy" id="4097"/>
    <lineage>
        <taxon>Eukaryota</taxon>
        <taxon>Viridiplantae</taxon>
        <taxon>Streptophyta</taxon>
        <taxon>Embryophyta</taxon>
        <taxon>Tracheophyta</taxon>
        <taxon>Spermatophyta</taxon>
        <taxon>Magnoliopsida</taxon>
        <taxon>eudicotyledons</taxon>
        <taxon>Gunneridae</taxon>
        <taxon>Pentapetalae</taxon>
        <taxon>asterids</taxon>
        <taxon>lamiids</taxon>
        <taxon>Solanales</taxon>
        <taxon>Solanaceae</taxon>
        <taxon>Nicotianoideae</taxon>
        <taxon>Nicotianeae</taxon>
        <taxon>Nicotiana</taxon>
    </lineage>
</organism>
<keyword id="KW-0175">Coiled coil</keyword>
<keyword id="KW-0963">Cytoplasm</keyword>
<keyword id="KW-0396">Initiation factor</keyword>
<keyword id="KW-0648">Protein biosynthesis</keyword>
<keyword id="KW-1185">Reference proteome</keyword>
<keyword id="KW-0694">RNA-binding</keyword>
<protein>
    <recommendedName>
        <fullName evidence="1">Eukaryotic translation initiation factor 3 subunit A</fullName>
        <shortName evidence="1">eIF3a</shortName>
    </recommendedName>
    <alternativeName>
        <fullName>Eukaryotic translation initiation factor 3 large subunit</fullName>
    </alternativeName>
    <alternativeName>
        <fullName evidence="1">Eukaryotic translation initiation factor 3 subunit 10</fullName>
    </alternativeName>
    <alternativeName>
        <fullName>PNLA-35</fullName>
    </alternativeName>
    <alternativeName>
        <fullName evidence="1">eIF-3-theta</fullName>
    </alternativeName>
</protein>
<reference key="1">
    <citation type="submission" date="1994-06" db="EMBL/GenBank/DDBJ databases">
        <authorList>
            <person name="Borisjuk N."/>
            <person name="Sitailo L."/>
        </authorList>
    </citation>
    <scope>NUCLEOTIDE SEQUENCE [MRNA]</scope>
    <source>
        <strain>cv. SR1</strain>
        <tissue>Leaf</tissue>
    </source>
</reference>
<accession>Q40554</accession>
<comment type="function">
    <text evidence="1">RNA-binding component of the eukaryotic translation initiation factor 3 (eIF-3) complex, which is involved in protein synthesis of a specialized repertoire of mRNAs and, together with other initiation factors, stimulates binding of mRNA and methionyl-tRNAi to the 40S ribosome. The eIF-3 complex specifically targets and initiates translation of a subset of mRNAs involved in cell proliferation.</text>
</comment>
<comment type="subunit">
    <text evidence="1">Component of the eukaryotic translation initiation factor 3 (eIF-3) complex.</text>
</comment>
<comment type="subcellular location">
    <subcellularLocation>
        <location evidence="1">Cytoplasm</location>
    </subcellularLocation>
</comment>
<comment type="similarity">
    <text evidence="1">Belongs to the eIF-3 subunit A family.</text>
</comment>
<dbReference type="EMBL" id="X79794">
    <property type="protein sequence ID" value="CAA56189.1"/>
    <property type="molecule type" value="mRNA"/>
</dbReference>
<dbReference type="PIR" id="S47179">
    <property type="entry name" value="S47179"/>
</dbReference>
<dbReference type="RefSeq" id="NP_001311594.1">
    <property type="nucleotide sequence ID" value="NM_001324665.1"/>
</dbReference>
<dbReference type="SMR" id="Q40554"/>
<dbReference type="STRING" id="4097.Q40554"/>
<dbReference type="PaxDb" id="4097-Q40554"/>
<dbReference type="GeneID" id="107760201"/>
<dbReference type="KEGG" id="nta:107760201"/>
<dbReference type="OrthoDB" id="18884at2759"/>
<dbReference type="Proteomes" id="UP000084051">
    <property type="component" value="Unplaced"/>
</dbReference>
<dbReference type="GO" id="GO:0016282">
    <property type="term" value="C:eukaryotic 43S preinitiation complex"/>
    <property type="evidence" value="ECO:0007669"/>
    <property type="project" value="UniProtKB-UniRule"/>
</dbReference>
<dbReference type="GO" id="GO:0033290">
    <property type="term" value="C:eukaryotic 48S preinitiation complex"/>
    <property type="evidence" value="ECO:0007669"/>
    <property type="project" value="UniProtKB-UniRule"/>
</dbReference>
<dbReference type="GO" id="GO:0071540">
    <property type="term" value="C:eukaryotic translation initiation factor 3 complex, eIF3e"/>
    <property type="evidence" value="ECO:0000318"/>
    <property type="project" value="GO_Central"/>
</dbReference>
<dbReference type="GO" id="GO:0071541">
    <property type="term" value="C:eukaryotic translation initiation factor 3 complex, eIF3m"/>
    <property type="evidence" value="ECO:0000318"/>
    <property type="project" value="GO_Central"/>
</dbReference>
<dbReference type="GO" id="GO:0043614">
    <property type="term" value="C:multi-eIF complex"/>
    <property type="evidence" value="ECO:0000318"/>
    <property type="project" value="GO_Central"/>
</dbReference>
<dbReference type="GO" id="GO:0003729">
    <property type="term" value="F:mRNA binding"/>
    <property type="evidence" value="ECO:0000318"/>
    <property type="project" value="GO_Central"/>
</dbReference>
<dbReference type="GO" id="GO:0003743">
    <property type="term" value="F:translation initiation factor activity"/>
    <property type="evidence" value="ECO:0007669"/>
    <property type="project" value="UniProtKB-UniRule"/>
</dbReference>
<dbReference type="GO" id="GO:0001732">
    <property type="term" value="P:formation of cytoplasmic translation initiation complex"/>
    <property type="evidence" value="ECO:0000318"/>
    <property type="project" value="GO_Central"/>
</dbReference>
<dbReference type="GO" id="GO:0002188">
    <property type="term" value="P:translation reinitiation"/>
    <property type="evidence" value="ECO:0000318"/>
    <property type="project" value="GO_Central"/>
</dbReference>
<dbReference type="FunFam" id="1.25.40.860:FF:000004">
    <property type="entry name" value="Eukaryotic translation initiation factor 3 subunit A"/>
    <property type="match status" value="1"/>
</dbReference>
<dbReference type="FunFam" id="1.25.40.860:FF:000006">
    <property type="entry name" value="Eukaryotic translation initiation factor 3 subunit A"/>
    <property type="match status" value="1"/>
</dbReference>
<dbReference type="FunFam" id="4.10.860.10:FF:000001">
    <property type="entry name" value="Eukaryotic translation initiation factor 3 subunit A"/>
    <property type="match status" value="1"/>
</dbReference>
<dbReference type="Gene3D" id="1.25.40.860">
    <property type="match status" value="2"/>
</dbReference>
<dbReference type="Gene3D" id="4.10.860.10">
    <property type="entry name" value="UVR domain"/>
    <property type="match status" value="1"/>
</dbReference>
<dbReference type="HAMAP" id="MF_03000">
    <property type="entry name" value="eIF3a"/>
    <property type="match status" value="1"/>
</dbReference>
<dbReference type="InterPro" id="IPR027512">
    <property type="entry name" value="EIF3A"/>
</dbReference>
<dbReference type="InterPro" id="IPR054711">
    <property type="entry name" value="eIF3a_PCI_TPR-like"/>
</dbReference>
<dbReference type="InterPro" id="IPR000717">
    <property type="entry name" value="PCI_dom"/>
</dbReference>
<dbReference type="PANTHER" id="PTHR14005:SF0">
    <property type="entry name" value="EUKARYOTIC TRANSLATION INITIATION FACTOR 3 SUBUNIT A"/>
    <property type="match status" value="1"/>
</dbReference>
<dbReference type="PANTHER" id="PTHR14005">
    <property type="entry name" value="EUKARYOTIC TRANSLATION INITIATION FACTOR 3, THETA SUBUNIT"/>
    <property type="match status" value="1"/>
</dbReference>
<dbReference type="Pfam" id="PF22591">
    <property type="entry name" value="eIF3a_PCI_TPR-like"/>
    <property type="match status" value="1"/>
</dbReference>
<dbReference type="Pfam" id="PF01399">
    <property type="entry name" value="PCI"/>
    <property type="match status" value="1"/>
</dbReference>
<dbReference type="SMART" id="SM00088">
    <property type="entry name" value="PINT"/>
    <property type="match status" value="1"/>
</dbReference>
<dbReference type="PROSITE" id="PS50250">
    <property type="entry name" value="PCI"/>
    <property type="match status" value="1"/>
</dbReference>
<sequence>MATFAKPENALKRAEELITVGQKQEALQALHDLITSRRYRAWQKTLERIMFKYVELCVDMRRGRFAKDGLIQYRIVCQQVNINSLEEVIKHFMHLATERAELARNQAQALEEALDVEDLEADKRPEDLMLSYVSGEKGKDRSDRELVTPWFKFLWETYRTVLEILRNNSRLEALYAMTAHRAFQFCKQYKRTTEFRRLCEIIRNHLANLNKYRDQRDRPDLSAPESLQLYLDTRFEQLKVATELGLWQEAFRSIEDIYGLMCMVKKTPKASLMVVYYGKLTEIFWMSSNHLYHAYAWLKLFSLQKSFNKNLSQKDLQLIASSVVLAALSVPPYDQSYGASHLELENEKERSLRVANLIGFEVEPKAENRVALSRSSLLSELVSKGVMSCVTQEVKDLYHLLENEFLPLDLALKVQPVLSKISKLGGKLSSVSSVPEVQLSQYVPALEKLATLRLLQQVSQVYQTIQIDNISKMIPFFDFTVIEKISVDAVRRNFLAIKVDHMKGLSSLVNRVLRRKDSGIICLFLAESLSKARTMIYPPAKKAAKLGEALSNLAEIVEKEHKRLLARKSIIEKRKEEQERLLLEMERVEETKRRDVQKMTEEAEQKRIAAEYEQRRNQRILKEIEDRELEEAQALLHEAEKRSKRKKKPVLEGEKMTKKVIMELALNEQLRERQEMEKKLLKFAKSMDHLERAKREEAAPLIESAFKQRLAEEAALHEREQQQEIELSRQRHAGDLEEKRRLARMLENKRILQEKVVSSREAEFTRMKRERQERISQIIQSRKQEREARRKMIFFLRSEEERQKRLQEEEEARKREEAERRKKEEAERQAKLDEIAEKQRRRMLELEEKEKREREEILRKSTAVLPKPAEPPTLGRPAELGGAAPIPAAAATAPTPGPGKYVPKHLRTKMDGAGQAPPPETDKWGGGSKPDDRPSWRDERKPPSFGSGSRTSWPASRR</sequence>